<reference key="1">
    <citation type="submission" date="2006-03" db="EMBL/GenBank/DDBJ databases">
        <title>Complete sequence of Shewanella denitrificans OS217.</title>
        <authorList>
            <consortium name="US DOE Joint Genome Institute"/>
            <person name="Copeland A."/>
            <person name="Lucas S."/>
            <person name="Lapidus A."/>
            <person name="Barry K."/>
            <person name="Detter J.C."/>
            <person name="Glavina del Rio T."/>
            <person name="Hammon N."/>
            <person name="Israni S."/>
            <person name="Dalin E."/>
            <person name="Tice H."/>
            <person name="Pitluck S."/>
            <person name="Brettin T."/>
            <person name="Bruce D."/>
            <person name="Han C."/>
            <person name="Tapia R."/>
            <person name="Gilna P."/>
            <person name="Kiss H."/>
            <person name="Schmutz J."/>
            <person name="Larimer F."/>
            <person name="Land M."/>
            <person name="Hauser L."/>
            <person name="Kyrpides N."/>
            <person name="Lykidis A."/>
            <person name="Richardson P."/>
        </authorList>
    </citation>
    <scope>NUCLEOTIDE SEQUENCE [LARGE SCALE GENOMIC DNA]</scope>
    <source>
        <strain>OS217 / ATCC BAA-1090 / DSM 15013</strain>
    </source>
</reference>
<proteinExistence type="inferred from homology"/>
<protein>
    <recommendedName>
        <fullName evidence="1">Glutamate racemase</fullName>
        <ecNumber evidence="1">5.1.1.3</ecNumber>
    </recommendedName>
</protein>
<keyword id="KW-0133">Cell shape</keyword>
<keyword id="KW-0961">Cell wall biogenesis/degradation</keyword>
<keyword id="KW-0413">Isomerase</keyword>
<keyword id="KW-0573">Peptidoglycan synthesis</keyword>
<keyword id="KW-1185">Reference proteome</keyword>
<feature type="chain" id="PRO_1000047605" description="Glutamate racemase">
    <location>
        <begin position="1"/>
        <end position="277"/>
    </location>
</feature>
<feature type="active site" description="Proton donor/acceptor" evidence="1">
    <location>
        <position position="73"/>
    </location>
</feature>
<feature type="active site" description="Proton donor/acceptor" evidence="1">
    <location>
        <position position="183"/>
    </location>
</feature>
<feature type="binding site" evidence="1">
    <location>
        <begin position="9"/>
        <end position="10"/>
    </location>
    <ligand>
        <name>substrate</name>
    </ligand>
</feature>
<feature type="binding site" evidence="1">
    <location>
        <begin position="41"/>
        <end position="42"/>
    </location>
    <ligand>
        <name>substrate</name>
    </ligand>
</feature>
<feature type="binding site" evidence="1">
    <location>
        <begin position="74"/>
        <end position="75"/>
    </location>
    <ligand>
        <name>substrate</name>
    </ligand>
</feature>
<feature type="binding site" evidence="1">
    <location>
        <begin position="184"/>
        <end position="185"/>
    </location>
    <ligand>
        <name>substrate</name>
    </ligand>
</feature>
<name>MURI_SHEDO</name>
<comment type="function">
    <text evidence="1">Provides the (R)-glutamate required for cell wall biosynthesis.</text>
</comment>
<comment type="catalytic activity">
    <reaction evidence="1">
        <text>L-glutamate = D-glutamate</text>
        <dbReference type="Rhea" id="RHEA:12813"/>
        <dbReference type="ChEBI" id="CHEBI:29985"/>
        <dbReference type="ChEBI" id="CHEBI:29986"/>
        <dbReference type="EC" id="5.1.1.3"/>
    </reaction>
</comment>
<comment type="pathway">
    <text evidence="1">Cell wall biogenesis; peptidoglycan biosynthesis.</text>
</comment>
<comment type="similarity">
    <text evidence="1">Belongs to the aspartate/glutamate racemases family.</text>
</comment>
<dbReference type="EC" id="5.1.1.3" evidence="1"/>
<dbReference type="EMBL" id="CP000302">
    <property type="protein sequence ID" value="ABE53529.1"/>
    <property type="molecule type" value="Genomic_DNA"/>
</dbReference>
<dbReference type="RefSeq" id="WP_011494696.1">
    <property type="nucleotide sequence ID" value="NC_007954.1"/>
</dbReference>
<dbReference type="SMR" id="Q12SP7"/>
<dbReference type="STRING" id="318161.Sden_0232"/>
<dbReference type="KEGG" id="sdn:Sden_0232"/>
<dbReference type="eggNOG" id="COG0796">
    <property type="taxonomic scope" value="Bacteria"/>
</dbReference>
<dbReference type="HOGENOM" id="CLU_052344_2_0_6"/>
<dbReference type="OrthoDB" id="9801055at2"/>
<dbReference type="UniPathway" id="UPA00219"/>
<dbReference type="Proteomes" id="UP000001982">
    <property type="component" value="Chromosome"/>
</dbReference>
<dbReference type="GO" id="GO:0008881">
    <property type="term" value="F:glutamate racemase activity"/>
    <property type="evidence" value="ECO:0007669"/>
    <property type="project" value="UniProtKB-UniRule"/>
</dbReference>
<dbReference type="GO" id="GO:0071555">
    <property type="term" value="P:cell wall organization"/>
    <property type="evidence" value="ECO:0007669"/>
    <property type="project" value="UniProtKB-KW"/>
</dbReference>
<dbReference type="GO" id="GO:0009252">
    <property type="term" value="P:peptidoglycan biosynthetic process"/>
    <property type="evidence" value="ECO:0007669"/>
    <property type="project" value="UniProtKB-UniRule"/>
</dbReference>
<dbReference type="GO" id="GO:0008360">
    <property type="term" value="P:regulation of cell shape"/>
    <property type="evidence" value="ECO:0007669"/>
    <property type="project" value="UniProtKB-KW"/>
</dbReference>
<dbReference type="FunFam" id="3.40.50.1860:FF:000001">
    <property type="entry name" value="Glutamate racemase"/>
    <property type="match status" value="1"/>
</dbReference>
<dbReference type="Gene3D" id="3.40.50.1860">
    <property type="match status" value="2"/>
</dbReference>
<dbReference type="HAMAP" id="MF_00258">
    <property type="entry name" value="Glu_racemase"/>
    <property type="match status" value="1"/>
</dbReference>
<dbReference type="InterPro" id="IPR015942">
    <property type="entry name" value="Asp/Glu/hydantoin_racemase"/>
</dbReference>
<dbReference type="InterPro" id="IPR001920">
    <property type="entry name" value="Asp/Glu_race"/>
</dbReference>
<dbReference type="InterPro" id="IPR018187">
    <property type="entry name" value="Asp/Glu_racemase_AS_1"/>
</dbReference>
<dbReference type="InterPro" id="IPR033134">
    <property type="entry name" value="Asp/Glu_racemase_AS_2"/>
</dbReference>
<dbReference type="InterPro" id="IPR004391">
    <property type="entry name" value="Glu_race"/>
</dbReference>
<dbReference type="NCBIfam" id="TIGR00067">
    <property type="entry name" value="glut_race"/>
    <property type="match status" value="1"/>
</dbReference>
<dbReference type="PANTHER" id="PTHR21198">
    <property type="entry name" value="GLUTAMATE RACEMASE"/>
    <property type="match status" value="1"/>
</dbReference>
<dbReference type="PANTHER" id="PTHR21198:SF2">
    <property type="entry name" value="GLUTAMATE RACEMASE"/>
    <property type="match status" value="1"/>
</dbReference>
<dbReference type="Pfam" id="PF01177">
    <property type="entry name" value="Asp_Glu_race"/>
    <property type="match status" value="1"/>
</dbReference>
<dbReference type="SUPFAM" id="SSF53681">
    <property type="entry name" value="Aspartate/glutamate racemase"/>
    <property type="match status" value="2"/>
</dbReference>
<dbReference type="PROSITE" id="PS00923">
    <property type="entry name" value="ASP_GLU_RACEMASE_1"/>
    <property type="match status" value="1"/>
</dbReference>
<dbReference type="PROSITE" id="PS00924">
    <property type="entry name" value="ASP_GLU_RACEMASE_2"/>
    <property type="match status" value="1"/>
</dbReference>
<organism>
    <name type="scientific">Shewanella denitrificans (strain OS217 / ATCC BAA-1090 / DSM 15013)</name>
    <dbReference type="NCBI Taxonomy" id="318161"/>
    <lineage>
        <taxon>Bacteria</taxon>
        <taxon>Pseudomonadati</taxon>
        <taxon>Pseudomonadota</taxon>
        <taxon>Gammaproteobacteria</taxon>
        <taxon>Alteromonadales</taxon>
        <taxon>Shewanellaceae</taxon>
        <taxon>Shewanella</taxon>
    </lineage>
</organism>
<sequence>MSGPILVFDSGIGGLSVLAEIRKRLPAENYCYLFDNARLPYGDLSESELIRGCVELICQQVQQVEAKIVVVACNTASTLVLPVLRQRLTIPVVGVVPAIKPAALLSKRKHIGVLATPGTVSRDYTHGLISQFAEDCQVDLFGSSELVMLAEQKAAKLPVNNQQLAKILAPIKASKLDVLVLGCTHFPMIKEELSQYLGESVLLLDSGEAIANRVASLLEPAALSEALHSGTTLHGGANSGTKGIGVIHAAYTQAITAGLNITLQEYGISDSSLIVTK</sequence>
<gene>
    <name evidence="1" type="primary">murI</name>
    <name type="ordered locus">Sden_0232</name>
</gene>
<accession>Q12SP7</accession>
<evidence type="ECO:0000255" key="1">
    <source>
        <dbReference type="HAMAP-Rule" id="MF_00258"/>
    </source>
</evidence>